<sequence>MLPLALLFGMLWTQANGHWCEQIETVHVEEEVTPRQEDLVPCTSLYHYSRLGWQLDLSWSGRVGLTRPPALGLCAIYKPPETRPATWNRTVRACCPGWGGAHCTDALAETSPKGHCFVTWHCQPLAGSANSSAGSLEDPADELGVWPLTLNDPILFPGMSLQWQGDWLVLSGGLGVVVRLDRSSSISISVDHEFWGRTQGLCGLYNGRPEDDFVEPGGGLATLAATFGNSWKLPGSEPGCLDAVEVAWGCESLLGGTLTDLEAVKLQAQAQDMCHQLLEGPFWQCHGQVQPDEYHETCLFAYCVGATAGNGPEGQLEAVCATFANYAQACARQHIYVHWRKPGFCERVCPGGQLYSDCVSSCPPSCSAVAQGEEGSCGKECVSGCECPTGLFWDGALCVPAAHCPCYHRRQRYAPGDTVKQQCNPCVCQDGRWHCAQALCPAECAVGGDGHYFTFDGRSFFFRGTPGCHYSLVQDSVKGQLLVVLEHGACDTGSCLHALSVFLGNTHIQLRYSGAVLVDGEDVDLPWIGVEGFNISWASSTFLLLHWPGAWVLWGVAEPAAYITLDPRHAYQVQGLCGTFTWKQQDDFLTPAGDIETSVTAFASKFQVSGDGRCPLVDKSPLFCSSYSQHLTFTEAACAILHGHAFQECHGLVDREPFRLRCLEAVCGCAPGRDCLCPVLSAYTRHCAQEGVLLQWRNETLCPVSCPGGQVYQECAPVCGHHCGEPEDCKELGICVAGCNCPPGLLWDLEGQCVPPSMCHCQFGGHRYTINTTTVRDCSHCICQERGLWNCTAHHCPRQWALCPRELIYVPGACLLTCDSPRANHSCWAGSTDGCVCPPGTVLLDKHCVSPDLCPCRHNGQWYPPNATIQEDCNICVCQGQRWHCTGQRCSGWCQASGAPHYVTFDGLVFTFPGACEYLLVREAGGRFSVSVQNLPCGASGLTCTKALVVRLDSTVVHMLRGQAVTVNGVSIRLPKVYTGPGLSLHHAGLFLLLTTRLGLTLLWDGGTRVLVQLSPHFHGRVAGLCGNFDSDASNDLRSRQGVLEPTAELTAHSWRLNPLCPEPGDLPHPVNAHRANWARARCEVILQPIFAPCHTEVPPQQYYEWCVYDACGCDTGGDCECLCSAIATYADECARHRHHVRWRSQELCPLQCEGGQVYEPCGSTCPPTCHDHHSELRWHCQVITCVEGCFCPEGTLLHGGACMKLAACPCEWQGSFFPPGTVLQKDCGNCTCQGSQWHCDRGGAPCEDMEPGCAEGETLCRENGHCVPLEWLCDNQDDCGDGSDEEGCATSVCGEGQMSCQSGHCLPLSLICDGQDDCGDGTDEQGCLCPHGSLACADGRCLPPALLCNGHPDCLDAADEESCLGPVSCISGEVSCVDGTCVRTIQLCDGVWDCPDGADEGPSHCSLPSLPTPPGGIGQNPSTSSLDTAPSPVGSTSPASPCSLLEFQCNSGECTPRGWRCDQEEDCTDGSDELDCGGPCMLYQVPCAHSPHCVSPGQLCDGVTQCPDGSDEDPDVCEEQSASGGANRTGAPCPEFSCPDGTCIDFLLVCDGNPDCELADETEPSLDEQGCGAWGSWGPWAPCSQTCGSGTRSRNRNCSTSSLQVLQNCPGLQHQSQACFTEACPVDGEWSSWSPWSPCSEPCGGTTTRHRQCRPPQNGGQDCALLPGSTHSTRQTSPCPQEGCLNATCFGELVFRTCAPCPLTCDDISGQAACPPDRPCSSPGCWCPDGKVLNTEGQCVRPRQCPCLVDGAHYWPGQRIKMDCQLCFLDCGWSSWSPWAECLGPCSSQSLQWSFRSPNNPRLSGHGRQCRGIHRKARRCQTEACEGCEQWGLMYNVGERWRGGPCMVCECLHSSITHCSPYCPIGSCPQGWVLVEGMGESCCHCALPEKNQTVIHMTTPAPAPASAPSPQIGAHLVTYVLPPTADACYSPLGLAGLPMWAPSQHWEHITRADPVEAPMAGPGPREGASAEWHTQPLYLQLDLRRPRNLTGIIVQRAGSSAAYVSTLSLQFSSDNLQWHNYVNSLSSTLSPPKPSPESSNHMAPEVWTFDQMVQARYIRVWPHSGHLRDNNQHDIFLWVELLGLSPLAPLCPGSRHRCASGECAPKGGPCDGAVDCDDGSDEEGCGSLHASTTSRTPALSPTQPGKFPREVSEDLRQGAEAMTSHSPPSSGETAGLIPASEGTLPVSGQPMQTLSATSTFPPGAKSLHPGMAAVTVHPPHSVTPGAPVGQTVSPRPFPPMPCGPGQVPCDVLGCVEQEQLCDGREDCLDGSDEQHCASAEPFTVPTTALPGLPASKALCSPSQLRCGSGECLPFEHRCDLQVNCQDGSDEDNCVDCVLAPWSGWSDCSRSCGLGLIFQHRELLRLPLPGGSCLLDQFRSQSCFVQACPVAGAWAEWGPWTACSVSCGGGHQSRQRSCVDPPPKNGGAPCPGPSHEKAPCNLQLCPGDTDCEPGLVHVNAELCQKGLVPPCPPSCLDPEANRSCSGHCMEGCRCPPGLLLQDSHCLPLSECPCLVGQKLIQPRLAFLLDNCSQCICEKGTLLCKPGACSQSCGWSAWSPWTACDRSCGSGVRARFRSPTNPPVAFGGSPCEGDRQELQACYTDCGTEIPGWTPWTSWSSCSQSCLVPGGDPGWRQRSRLCPSSRDTFCPGEATQEEPCSPPVCPVPSAWGLWASWSTCSASCNGGIQTRGRSCSGSAPGNPVCLGPHTQTRDCNMHPCTAQCPGNMVFRSAEQCLEEGGPCPQLCLAQDPGVECTGSCAPSCNCPPGLFLHNASCLPRSQCPCQLHGQLYAPGAVAHLDCNNCTCISGEMVCTSKRCPVACGWSPWTPWSPCSQSCNVGIRRRFRAGTEPPAAFGGAECQGPNLDAEFCSLRPCRGPGAAWSSWTPCSVPCGGGYRNRTQGSGPHSPIEFSTCSLQPCAGPVPGVCPEDQQWLDCAQGPASCAHLSIPGEANQTCHPGCYCLSGMLLLNNVCVPVQDCPCAHRGRLYSPGSAVHLPCENCSCISGLITNCSSWPCEEGQPAWSSWTPWSVCSASCNPARRHRHRFCARPPHRAPFSLVLLTTVAAPTTLCPGPEAEEEPCLLPGCNQAGGWSPWSPWSGCSRSCGGGLRSRTRACDQPSPQGLGDFCEGPQAQGEACQAQPCPVTNCSAMEGAEYSPCGPPCPRSCDDLVHCVWRCQPGCYCPLGKVLSADGAICVKPSYCSCLDLLTGKRHHAGTQLMRPDGCNHCTCMEGRLNCTDLPCQVSGDWCPWSKWTACSQPCRGQTRTRSRACVCPAPQHGGSPCPEESGGTGVQHQMEACPNATACPVDGAWSPWGPWSSCDACLGQSYRSRVCSHPPISDGGKPCLGGYQQSRPCRNSSTLCTDCGGGQDLLPCGQPCPHSCQDLSLGSTCQPGSAGCQSGCGCPPGQLSQDGLCVFPVDCHCHFQPRAMGIPENRSRSVGSTLSSWESLEPGEVVTGPCDNCTCVAGILQCHEVPSCPGPGIWSSWGPWEKCSVSCGGGEQLRSRQCARPPCPGLAQQSRICHIHVCRETGCPAGRLYRECQPSDGCPFSCAHVTGQVACFSERCKEGCHCPEGTFQHHVACVQECPCVLTVLLLQELGLASAALGSYPTLLGDEGKPLGPGVELLPGQMLQTDCGNCSCVHGKLSCSMVECSRVHGSFGPWGMWSLCSRSCGGLGTRTRTRQCVLPTLAPGGLSCRGPLQDLEYCFSPECPGTAGSTVEPVTGLAGGWGPWSPWSPCSHSCTDPAHPAWRSRTRLCLANCTVGDSSQERPCNLPSCAALLPCPGPGCGSGNCFWTSWAPWEPCSRSCGVGQQRRLRAYHPPGPGGHWCPDILTAYQERRFCNLRACPVPGGWSHWSPWSWCDRSCGGGRSLRSRSCSSPPPKNGGTSCVGERHHVRPCNPMPCEEGCPAGMEMVSCANHCPYSCSDLQEGGMCQEDQACQLGCRCSEGFLEQDGGCVPVGHCECTDAQGRSWAPGSQHQDACNNCSCQAGQLSCTAQLCSPPAHCAWSHWSAWSSCSHSCGPQGQQSRFRSSTSGSWALECQKEQSQSQPCPEVPCPPLCLHEAHLHELGDNWLHGECQQCSCTPEGAICKDTDCAVPRGWTLWSSWSYCSVSCGGGSQVRTRSCTVSAPPHGSLSCEGPDTQTRHCGQQLCLQKLERCSWGPWGPCSRSCGTGLASRSGSCPCLLTKEDSKCNDTFLGLDTQACYSGPCQDDCTWGDWSSWTRCSCKVLVQQRYRHQVPAPGQAGEGTPCTRLDGHFRPCTIGNCSEDSCPPPFEFQSCGSPCAGLCATHLNHRLCQDLPPCQPGCYCPKGLLEQAGSCILPEQCNCWHISGEGARVTLAPGDRLQLGCKECVCRRGELQCSSQGCEGLLPLTGWSEWSPCGPCLPQSALAPASRTALEGHWPLNTSDLPPPSVTLLASEQYRHRLCLDPETRRPWAGDPALCTVPLSQQRLCPDPGACNDTCQWGPWGPWSPCQMPCSGGFKLRWRVARDTSAGECPGPWAQTESCNMGSCPGESCETRDTVFTLDCANQCPRSCADLWDGVQCLQGPCSPGCRCPPGQLVQDGHCVPISSCRCGLPSANASWELAPTQVVQLDCHNCTCINGTLMCPHLECPVLGPWSAWSECSAVCGKGTMVRHRSCEEHPDREPCQALDLQQWQECNLQACPECPPGQVLSTCATMCPSLCSHLWPGTICVREPCQLGCGCPGGQLLYNGTCIPPEACPCTQFSLPWGLTLPLEEQARELPSGTVLTRNCTHCTCQGGAFICSLTDCQECAPGEIWQHGKLGPCEKTCPEMNMTQAWSNCTEAQAPGCVCQLGYFRSQTGLCVPEDHCECWHHGSPHLPGSEWQEACESCRCLHGKSVCIRHCPELSCAQGEVIMQEPGSCCPICQQDTLKEEPVSCRYLTELRNLTKGPCHLDQIEVSYCSGHCRSSTNVMTEEPYLQSQCDCCSYRLDPDSPVRILNLLCPDGHTEPVVLPVIHSCQCSACQGGDFSKH</sequence>
<keyword id="KW-0106">Calcium</keyword>
<keyword id="KW-0130">Cell adhesion</keyword>
<keyword id="KW-1015">Disulfide bond</keyword>
<keyword id="KW-0245">EGF-like domain</keyword>
<keyword id="KW-0325">Glycoprotein</keyword>
<keyword id="KW-1185">Reference proteome</keyword>
<keyword id="KW-0677">Repeat</keyword>
<keyword id="KW-0964">Secreted</keyword>
<keyword id="KW-0732">Signal</keyword>
<comment type="function">
    <text evidence="1">Involved in the modulation of neuronal aggregation (By similarity). May be involved in developmental events during the formation of the central nervous system (By similarity).</text>
</comment>
<comment type="subcellular location">
    <subcellularLocation>
        <location evidence="1">Secreted</location>
        <location evidence="1">Extracellular space</location>
    </subcellularLocation>
</comment>
<comment type="tissue specificity">
    <text evidence="10">Subcommissural organ.</text>
</comment>
<comment type="developmental stage">
    <text evidence="10">Weakly expressed at 14 dpc and 15 dpc in the SCO anlage; increasing progressively until 17 dpc.</text>
</comment>
<comment type="similarity">
    <text evidence="11">Belongs to the thrombospondin family.</text>
</comment>
<dbReference type="EMBL" id="AJ491857">
    <property type="protein sequence ID" value="CAD42654.1"/>
    <property type="molecule type" value="mRNA"/>
</dbReference>
<dbReference type="EMBL" id="AC153815">
    <property type="status" value="NOT_ANNOTATED_CDS"/>
    <property type="molecule type" value="Genomic_DNA"/>
</dbReference>
<dbReference type="SMR" id="Q8CG65"/>
<dbReference type="FunCoup" id="Q8CG65">
    <property type="interactions" value="73"/>
</dbReference>
<dbReference type="STRING" id="10090.ENSMUSP00000131401"/>
<dbReference type="GlyCosmos" id="Q8CG65">
    <property type="glycosylation" value="43 sites, No reported glycans"/>
</dbReference>
<dbReference type="GlyGen" id="Q8CG65">
    <property type="glycosylation" value="46 sites, 5 N-linked glycans (6 sites), 1 O-linked glycan (1 site)"/>
</dbReference>
<dbReference type="iPTMnet" id="Q8CG65"/>
<dbReference type="PhosphoSitePlus" id="Q8CG65"/>
<dbReference type="SwissPalm" id="Q8CG65"/>
<dbReference type="PaxDb" id="10090-ENSMUSP00000131401"/>
<dbReference type="UCSC" id="uc009bul.1">
    <property type="organism name" value="mouse"/>
</dbReference>
<dbReference type="AGR" id="MGI:2674311"/>
<dbReference type="MGI" id="MGI:2674311">
    <property type="gene designation" value="Sspo"/>
</dbReference>
<dbReference type="VEuPathDB" id="HostDB:ENSMUSG00000029797"/>
<dbReference type="eggNOG" id="KOG1215">
    <property type="taxonomic scope" value="Eukaryota"/>
</dbReference>
<dbReference type="eggNOG" id="KOG1216">
    <property type="taxonomic scope" value="Eukaryota"/>
</dbReference>
<dbReference type="eggNOG" id="KOG3509">
    <property type="taxonomic scope" value="Eukaryota"/>
</dbReference>
<dbReference type="eggNOG" id="KOG3538">
    <property type="taxonomic scope" value="Eukaryota"/>
</dbReference>
<dbReference type="eggNOG" id="KOG3611">
    <property type="taxonomic scope" value="Eukaryota"/>
</dbReference>
<dbReference type="InParanoid" id="Q8CG65"/>
<dbReference type="OrthoDB" id="6262482at2759"/>
<dbReference type="Reactome" id="R-MMU-5173214">
    <property type="pathway name" value="O-glycosylation of TSR domain-containing proteins"/>
</dbReference>
<dbReference type="ChiTaRS" id="Sspo">
    <property type="organism name" value="mouse"/>
</dbReference>
<dbReference type="PRO" id="PR:Q8CG65"/>
<dbReference type="Proteomes" id="UP000000589">
    <property type="component" value="Chromosome 6"/>
</dbReference>
<dbReference type="RNAct" id="Q8CG65">
    <property type="molecule type" value="protein"/>
</dbReference>
<dbReference type="Bgee" id="ENSMUSG00000029797">
    <property type="expression patterns" value="Expressed in hypothalamus and 43 other cell types or tissues"/>
</dbReference>
<dbReference type="ExpressionAtlas" id="Q8CG65">
    <property type="expression patterns" value="baseline and differential"/>
</dbReference>
<dbReference type="GO" id="GO:0062023">
    <property type="term" value="C:collagen-containing extracellular matrix"/>
    <property type="evidence" value="ECO:0007005"/>
    <property type="project" value="BHF-UCL"/>
</dbReference>
<dbReference type="GO" id="GO:0005737">
    <property type="term" value="C:cytoplasm"/>
    <property type="evidence" value="ECO:0000314"/>
    <property type="project" value="MGI"/>
</dbReference>
<dbReference type="GO" id="GO:0005576">
    <property type="term" value="C:extracellular region"/>
    <property type="evidence" value="ECO:0007669"/>
    <property type="project" value="UniProtKB-SubCell"/>
</dbReference>
<dbReference type="GO" id="GO:0007155">
    <property type="term" value="P:cell adhesion"/>
    <property type="evidence" value="ECO:0007669"/>
    <property type="project" value="UniProtKB-KW"/>
</dbReference>
<dbReference type="CDD" id="cd00112">
    <property type="entry name" value="LDLa"/>
    <property type="match status" value="8"/>
</dbReference>
<dbReference type="CDD" id="cd19941">
    <property type="entry name" value="TIL"/>
    <property type="match status" value="13"/>
</dbReference>
<dbReference type="FunFam" id="2.20.100.10:FF:000004">
    <property type="entry name" value="Adhesion G protein-coupled receptor B2"/>
    <property type="match status" value="2"/>
</dbReference>
<dbReference type="FunFam" id="2.10.25.10:FF:000055">
    <property type="entry name" value="alpha-tectorin isoform X1"/>
    <property type="match status" value="4"/>
</dbReference>
<dbReference type="FunFam" id="2.20.100.10:FF:000051">
    <property type="entry name" value="Cartilage intermediate layer protein 2"/>
    <property type="match status" value="2"/>
</dbReference>
<dbReference type="FunFam" id="2.20.100.10:FF:000067">
    <property type="entry name" value="Hemicentin 1"/>
    <property type="match status" value="1"/>
</dbReference>
<dbReference type="FunFam" id="2.20.100.10:FF:000104">
    <property type="entry name" value="Papilin"/>
    <property type="match status" value="1"/>
</dbReference>
<dbReference type="FunFam" id="4.10.400.10:FF:000167">
    <property type="entry name" value="Predicted protein"/>
    <property type="match status" value="1"/>
</dbReference>
<dbReference type="FunFam" id="2.10.25.10:FF:000217">
    <property type="entry name" value="SCO-spondin"/>
    <property type="match status" value="4"/>
</dbReference>
<dbReference type="FunFam" id="2.20.100.10:FF:000080">
    <property type="entry name" value="SCO-spondin"/>
    <property type="match status" value="3"/>
</dbReference>
<dbReference type="FunFam" id="2.20.100.10:FF:000177">
    <property type="entry name" value="SCO-spondin"/>
    <property type="match status" value="1"/>
</dbReference>
<dbReference type="FunFam" id="2.60.120.260:FF:000267">
    <property type="entry name" value="SCO-spondin"/>
    <property type="match status" value="1"/>
</dbReference>
<dbReference type="FunFam" id="4.10.400.10:FF:000208">
    <property type="entry name" value="SCO-spondin"/>
    <property type="match status" value="1"/>
</dbReference>
<dbReference type="FunFam" id="4.10.400.10:FF:000243">
    <property type="entry name" value="SCO-spondin"/>
    <property type="match status" value="1"/>
</dbReference>
<dbReference type="FunFam" id="2.20.100.10:FF:000152">
    <property type="entry name" value="SCO-spondin isoform X3"/>
    <property type="match status" value="1"/>
</dbReference>
<dbReference type="FunFam" id="2.20.100.10:FF:000093">
    <property type="entry name" value="SCO-spondin-like isoform 1"/>
    <property type="match status" value="1"/>
</dbReference>
<dbReference type="FunFam" id="2.20.100.10:FF:000001">
    <property type="entry name" value="semaphorin-5A isoform X1"/>
    <property type="match status" value="2"/>
</dbReference>
<dbReference type="FunFam" id="2.20.100.10:FF:000002">
    <property type="entry name" value="Unc-5 netrin receptor C"/>
    <property type="match status" value="1"/>
</dbReference>
<dbReference type="Gene3D" id="2.40.128.620">
    <property type="match status" value="1"/>
</dbReference>
<dbReference type="Gene3D" id="2.60.120.260">
    <property type="entry name" value="Galactose-binding domain-like"/>
    <property type="match status" value="1"/>
</dbReference>
<dbReference type="Gene3D" id="2.10.25.10">
    <property type="entry name" value="Laminin"/>
    <property type="match status" value="14"/>
</dbReference>
<dbReference type="Gene3D" id="4.10.400.10">
    <property type="entry name" value="Low-density Lipoprotein Receptor"/>
    <property type="match status" value="8"/>
</dbReference>
<dbReference type="Gene3D" id="2.20.100.10">
    <property type="entry name" value="Thrombospondin type-1 (TSP1) repeat"/>
    <property type="match status" value="23"/>
</dbReference>
<dbReference type="InterPro" id="IPR006207">
    <property type="entry name" value="Cys_knot_C"/>
</dbReference>
<dbReference type="InterPro" id="IPR000421">
    <property type="entry name" value="FA58C"/>
</dbReference>
<dbReference type="InterPro" id="IPR008979">
    <property type="entry name" value="Galactose-bd-like_sf"/>
</dbReference>
<dbReference type="InterPro" id="IPR036055">
    <property type="entry name" value="LDL_receptor-like_sf"/>
</dbReference>
<dbReference type="InterPro" id="IPR023415">
    <property type="entry name" value="LDLR_class-A_CS"/>
</dbReference>
<dbReference type="InterPro" id="IPR002172">
    <property type="entry name" value="LDrepeatLR_classA_rpt"/>
</dbReference>
<dbReference type="InterPro" id="IPR050780">
    <property type="entry name" value="Mucin_vWF_Thrombospondin_sf"/>
</dbReference>
<dbReference type="InterPro" id="IPR036084">
    <property type="entry name" value="Ser_inhib-like_sf"/>
</dbReference>
<dbReference type="InterPro" id="IPR002919">
    <property type="entry name" value="TIL_dom"/>
</dbReference>
<dbReference type="InterPro" id="IPR000884">
    <property type="entry name" value="TSP1_rpt"/>
</dbReference>
<dbReference type="InterPro" id="IPR036383">
    <property type="entry name" value="TSP1_rpt_sf"/>
</dbReference>
<dbReference type="InterPro" id="IPR014853">
    <property type="entry name" value="VWF/SSPO/ZAN-like_Cys-rich_dom"/>
</dbReference>
<dbReference type="InterPro" id="IPR001007">
    <property type="entry name" value="VWF_dom"/>
</dbReference>
<dbReference type="InterPro" id="IPR001846">
    <property type="entry name" value="VWF_type-D"/>
</dbReference>
<dbReference type="PANTHER" id="PTHR11339">
    <property type="entry name" value="EXTRACELLULAR MATRIX GLYCOPROTEIN RELATED"/>
    <property type="match status" value="1"/>
</dbReference>
<dbReference type="PANTHER" id="PTHR11339:SF396">
    <property type="entry name" value="SCO-SPONDIN"/>
    <property type="match status" value="1"/>
</dbReference>
<dbReference type="Pfam" id="PF08742">
    <property type="entry name" value="C8"/>
    <property type="match status" value="3"/>
</dbReference>
<dbReference type="Pfam" id="PF00754">
    <property type="entry name" value="F5_F8_type_C"/>
    <property type="match status" value="1"/>
</dbReference>
<dbReference type="Pfam" id="PF00057">
    <property type="entry name" value="Ldl_recept_a"/>
    <property type="match status" value="7"/>
</dbReference>
<dbReference type="Pfam" id="PF01826">
    <property type="entry name" value="TIL"/>
    <property type="match status" value="12"/>
</dbReference>
<dbReference type="Pfam" id="PF00090">
    <property type="entry name" value="TSP_1"/>
    <property type="match status" value="23"/>
</dbReference>
<dbReference type="Pfam" id="PF00093">
    <property type="entry name" value="VWC"/>
    <property type="match status" value="1"/>
</dbReference>
<dbReference type="Pfam" id="PF00094">
    <property type="entry name" value="VWD"/>
    <property type="match status" value="3"/>
</dbReference>
<dbReference type="Pfam" id="PF23244">
    <property type="entry name" value="VWF"/>
    <property type="match status" value="1"/>
</dbReference>
<dbReference type="PRINTS" id="PR00261">
    <property type="entry name" value="LDLRECEPTOR"/>
</dbReference>
<dbReference type="SMART" id="SM00832">
    <property type="entry name" value="C8"/>
    <property type="match status" value="3"/>
</dbReference>
<dbReference type="SMART" id="SM00192">
    <property type="entry name" value="LDLa"/>
    <property type="match status" value="10"/>
</dbReference>
<dbReference type="SMART" id="SM00209">
    <property type="entry name" value="TSP1"/>
    <property type="match status" value="25"/>
</dbReference>
<dbReference type="SMART" id="SM00214">
    <property type="entry name" value="VWC"/>
    <property type="match status" value="4"/>
</dbReference>
<dbReference type="SMART" id="SM00215">
    <property type="entry name" value="VWC_out"/>
    <property type="match status" value="9"/>
</dbReference>
<dbReference type="SMART" id="SM00216">
    <property type="entry name" value="VWD"/>
    <property type="match status" value="2"/>
</dbReference>
<dbReference type="SUPFAM" id="SSF57603">
    <property type="entry name" value="FnI-like domain"/>
    <property type="match status" value="4"/>
</dbReference>
<dbReference type="SUPFAM" id="SSF49785">
    <property type="entry name" value="Galactose-binding domain-like"/>
    <property type="match status" value="1"/>
</dbReference>
<dbReference type="SUPFAM" id="SSF57424">
    <property type="entry name" value="LDL receptor-like module"/>
    <property type="match status" value="9"/>
</dbReference>
<dbReference type="SUPFAM" id="SSF57567">
    <property type="entry name" value="Serine protease inhibitors"/>
    <property type="match status" value="14"/>
</dbReference>
<dbReference type="SUPFAM" id="SSF82895">
    <property type="entry name" value="TSP-1 type 1 repeat"/>
    <property type="match status" value="24"/>
</dbReference>
<dbReference type="PROSITE" id="PS01225">
    <property type="entry name" value="CTCK_2"/>
    <property type="match status" value="1"/>
</dbReference>
<dbReference type="PROSITE" id="PS01186">
    <property type="entry name" value="EGF_2"/>
    <property type="match status" value="2"/>
</dbReference>
<dbReference type="PROSITE" id="PS50022">
    <property type="entry name" value="FA58C_3"/>
    <property type="match status" value="1"/>
</dbReference>
<dbReference type="PROSITE" id="PS01209">
    <property type="entry name" value="LDLRA_1"/>
    <property type="match status" value="8"/>
</dbReference>
<dbReference type="PROSITE" id="PS50068">
    <property type="entry name" value="LDLRA_2"/>
    <property type="match status" value="10"/>
</dbReference>
<dbReference type="PROSITE" id="PS50092">
    <property type="entry name" value="TSP1"/>
    <property type="match status" value="25"/>
</dbReference>
<dbReference type="PROSITE" id="PS01208">
    <property type="entry name" value="VWFC_1"/>
    <property type="match status" value="1"/>
</dbReference>
<dbReference type="PROSITE" id="PS50184">
    <property type="entry name" value="VWFC_2"/>
    <property type="match status" value="2"/>
</dbReference>
<dbReference type="PROSITE" id="PS51233">
    <property type="entry name" value="VWFD"/>
    <property type="match status" value="3"/>
</dbReference>
<evidence type="ECO:0000250" key="1">
    <source>
        <dbReference type="UniProtKB" id="P98167"/>
    </source>
</evidence>
<evidence type="ECO:0000255" key="2"/>
<evidence type="ECO:0000255" key="3">
    <source>
        <dbReference type="PROSITE-ProRule" id="PRU00039"/>
    </source>
</evidence>
<evidence type="ECO:0000255" key="4">
    <source>
        <dbReference type="PROSITE-ProRule" id="PRU00081"/>
    </source>
</evidence>
<evidence type="ECO:0000255" key="5">
    <source>
        <dbReference type="PROSITE-ProRule" id="PRU00124"/>
    </source>
</evidence>
<evidence type="ECO:0000255" key="6">
    <source>
        <dbReference type="PROSITE-ProRule" id="PRU00210"/>
    </source>
</evidence>
<evidence type="ECO:0000255" key="7">
    <source>
        <dbReference type="PROSITE-ProRule" id="PRU00220"/>
    </source>
</evidence>
<evidence type="ECO:0000255" key="8">
    <source>
        <dbReference type="PROSITE-ProRule" id="PRU00580"/>
    </source>
</evidence>
<evidence type="ECO:0000256" key="9">
    <source>
        <dbReference type="SAM" id="MobiDB-lite"/>
    </source>
</evidence>
<evidence type="ECO:0000269" key="10">
    <source>
    </source>
</evidence>
<evidence type="ECO:0000305" key="11"/>
<evidence type="ECO:0000312" key="12">
    <source>
        <dbReference type="MGI" id="MGI:2674311"/>
    </source>
</evidence>
<gene>
    <name evidence="12" type="primary">Sspo</name>
</gene>
<organism>
    <name type="scientific">Mus musculus</name>
    <name type="common">Mouse</name>
    <dbReference type="NCBI Taxonomy" id="10090"/>
    <lineage>
        <taxon>Eukaryota</taxon>
        <taxon>Metazoa</taxon>
        <taxon>Chordata</taxon>
        <taxon>Craniata</taxon>
        <taxon>Vertebrata</taxon>
        <taxon>Euteleostomi</taxon>
        <taxon>Mammalia</taxon>
        <taxon>Eutheria</taxon>
        <taxon>Euarchontoglires</taxon>
        <taxon>Glires</taxon>
        <taxon>Rodentia</taxon>
        <taxon>Myomorpha</taxon>
        <taxon>Muroidea</taxon>
        <taxon>Muridae</taxon>
        <taxon>Murinae</taxon>
        <taxon>Mus</taxon>
        <taxon>Mus</taxon>
    </lineage>
</organism>
<name>SSPO_MOUSE</name>
<reference key="1">
    <citation type="journal article" date="2003" name="Gene">
        <title>Mouse SCO-spondin, a gene of the thrombospondin type 1 repeat (TSR) superfamily expressed in the brain.</title>
        <authorList>
            <person name="Goncalves-Mendes N."/>
            <person name="Simon-Chazottes D."/>
            <person name="Creveaux I."/>
            <person name="Meiniel A."/>
            <person name="Guenet J.-L."/>
            <person name="Meiniel R."/>
        </authorList>
    </citation>
    <scope>NUCLEOTIDE SEQUENCE [MRNA]</scope>
    <scope>DEVELOPMENTAL STAGE</scope>
    <scope>TISSUE SPECIFICITY</scope>
    <source>
        <strain>ICR</strain>
        <tissue>Brain</tissue>
    </source>
</reference>
<reference key="2">
    <citation type="journal article" date="2009" name="PLoS Biol.">
        <title>Lineage-specific biology revealed by a finished genome assembly of the mouse.</title>
        <authorList>
            <person name="Church D.M."/>
            <person name="Goodstadt L."/>
            <person name="Hillier L.W."/>
            <person name="Zody M.C."/>
            <person name="Goldstein S."/>
            <person name="She X."/>
            <person name="Bult C.J."/>
            <person name="Agarwala R."/>
            <person name="Cherry J.L."/>
            <person name="DiCuccio M."/>
            <person name="Hlavina W."/>
            <person name="Kapustin Y."/>
            <person name="Meric P."/>
            <person name="Maglott D."/>
            <person name="Birtle Z."/>
            <person name="Marques A.C."/>
            <person name="Graves T."/>
            <person name="Zhou S."/>
            <person name="Teague B."/>
            <person name="Potamousis K."/>
            <person name="Churas C."/>
            <person name="Place M."/>
            <person name="Herschleb J."/>
            <person name="Runnheim R."/>
            <person name="Forrest D."/>
            <person name="Amos-Landgraf J."/>
            <person name="Schwartz D.C."/>
            <person name="Cheng Z."/>
            <person name="Lindblad-Toh K."/>
            <person name="Eichler E.E."/>
            <person name="Ponting C.P."/>
        </authorList>
    </citation>
    <scope>NUCLEOTIDE SEQUENCE [LARGE SCALE GENOMIC DNA]</scope>
    <source>
        <strain>C57BL/6J</strain>
    </source>
</reference>
<proteinExistence type="evidence at transcript level"/>
<accession>Q8CG65</accession>
<accession>E9QMN0</accession>
<protein>
    <recommendedName>
        <fullName>SCO-spondin</fullName>
    </recommendedName>
</protein>
<feature type="signal peptide" evidence="2">
    <location>
        <begin position="1"/>
        <end position="17"/>
    </location>
</feature>
<feature type="chain" id="PRO_0000245043" description="SCO-spondin">
    <location>
        <begin position="18"/>
        <end position="4998"/>
    </location>
</feature>
<feature type="domain" description="EMI">
    <location>
        <begin position="18"/>
        <end position="102"/>
    </location>
</feature>
<feature type="domain" description="VWFD 1" evidence="8">
    <location>
        <begin position="72"/>
        <end position="241"/>
    </location>
</feature>
<feature type="domain" description="TIL 1" evidence="2">
    <location>
        <begin position="349"/>
        <end position="404"/>
    </location>
</feature>
<feature type="domain" description="VWFC 1" evidence="7">
    <location>
        <begin position="404"/>
        <end position="496"/>
    </location>
</feature>
<feature type="domain" description="VWFD 2" evidence="8">
    <location>
        <begin position="442"/>
        <end position="615"/>
    </location>
</feature>
<feature type="domain" description="TIL 2" evidence="2">
    <location>
        <begin position="706"/>
        <end position="759"/>
    </location>
</feature>
<feature type="domain" description="VWFD 3" evidence="8">
    <location>
        <begin position="892"/>
        <end position="1062"/>
    </location>
</feature>
<feature type="domain" description="TIL 3" evidence="2">
    <location>
        <begin position="1153"/>
        <end position="1209"/>
    </location>
</feature>
<feature type="domain" description="LDL-receptor class A 1" evidence="5">
    <location>
        <begin position="1253"/>
        <end position="1290"/>
    </location>
</feature>
<feature type="domain" description="LDL-receptor class A 2" evidence="5">
    <location>
        <begin position="1293"/>
        <end position="1328"/>
    </location>
</feature>
<feature type="domain" description="LDL-receptor class A 3" evidence="5">
    <location>
        <begin position="1329"/>
        <end position="1365"/>
    </location>
</feature>
<feature type="domain" description="LDL-receptor class A 4" evidence="5">
    <location>
        <begin position="1369"/>
        <end position="1407"/>
    </location>
</feature>
<feature type="domain" description="LDL-receptor class A 5" evidence="5">
    <location>
        <begin position="1442"/>
        <end position="1478"/>
    </location>
</feature>
<feature type="domain" description="LDL-receptor class A 6" evidence="5">
    <location>
        <begin position="1480"/>
        <end position="1519"/>
    </location>
</feature>
<feature type="domain" description="LDL-receptor class A 7" evidence="5">
    <location>
        <begin position="1533"/>
        <end position="1571"/>
    </location>
</feature>
<feature type="domain" description="TSP type-1 1" evidence="6">
    <location>
        <begin position="1572"/>
        <end position="1626"/>
    </location>
</feature>
<feature type="domain" description="TSP type-1 2" evidence="6">
    <location>
        <begin position="1628"/>
        <end position="1686"/>
    </location>
</feature>
<feature type="domain" description="TIL 4" evidence="2">
    <location>
        <begin position="1692"/>
        <end position="1746"/>
    </location>
</feature>
<feature type="domain" description="EGF-like 1">
    <location>
        <begin position="1702"/>
        <end position="1741"/>
    </location>
</feature>
<feature type="domain" description="EGF-like 2">
    <location>
        <begin position="1742"/>
        <end position="1768"/>
    </location>
</feature>
<feature type="domain" description="TSP type-1 3" evidence="6">
    <location>
        <begin position="1771"/>
        <end position="1827"/>
    </location>
</feature>
<feature type="domain" description="VWFC 2" evidence="7">
    <location>
        <begin position="1827"/>
        <end position="1887"/>
    </location>
</feature>
<feature type="domain" description="F5/8 type C" evidence="4">
    <location>
        <begin position="1929"/>
        <end position="2085"/>
    </location>
</feature>
<feature type="domain" description="LDL-receptor class A 8" evidence="5">
    <location>
        <begin position="2091"/>
        <end position="2127"/>
    </location>
</feature>
<feature type="domain" description="LDL-receptor class A 9" evidence="5">
    <location>
        <begin position="2242"/>
        <end position="2278"/>
    </location>
</feature>
<feature type="domain" description="LDL-receptor class A 10" evidence="5">
    <location>
        <begin position="2299"/>
        <end position="2335"/>
    </location>
</feature>
<feature type="domain" description="TSP type-1 4" evidence="6">
    <location>
        <begin position="2336"/>
        <end position="2389"/>
    </location>
</feature>
<feature type="domain" description="TSP type-1 5" evidence="6">
    <location>
        <begin position="2391"/>
        <end position="2446"/>
    </location>
</feature>
<feature type="domain" description="TIL 5" evidence="2">
    <location>
        <begin position="2468"/>
        <end position="2511"/>
    </location>
</feature>
<feature type="domain" description="TSP type-1 6" evidence="6">
    <location>
        <begin position="2551"/>
        <end position="2605"/>
    </location>
</feature>
<feature type="domain" description="TSP type-1 7" evidence="6">
    <location>
        <begin position="2609"/>
        <end position="2664"/>
    </location>
</feature>
<feature type="domain" description="TSP type-1 8" evidence="6">
    <location>
        <begin position="2666"/>
        <end position="2719"/>
    </location>
</feature>
<feature type="domain" description="TSP type-1 9" evidence="6">
    <location>
        <begin position="2820"/>
        <end position="2875"/>
    </location>
</feature>
<feature type="domain" description="TSP type-1 10" evidence="6">
    <location>
        <begin position="2876"/>
        <end position="2919"/>
    </location>
</feature>
<feature type="domain" description="TIL 6" evidence="2">
    <location>
        <begin position="2926"/>
        <end position="2978"/>
    </location>
</feature>
<feature type="domain" description="TSP type-1 11" evidence="6">
    <location>
        <begin position="3019"/>
        <end position="3086"/>
    </location>
</feature>
<feature type="domain" description="TSP type-1 12" evidence="6">
    <location>
        <begin position="3088"/>
        <end position="3143"/>
    </location>
</feature>
<feature type="domain" description="TIL 7" evidence="2">
    <location>
        <begin position="3151"/>
        <end position="3201"/>
    </location>
</feature>
<feature type="domain" description="TSP type-1 13" evidence="6">
    <location>
        <begin position="3244"/>
        <end position="3306"/>
    </location>
</feature>
<feature type="domain" description="TSP type-1 14" evidence="6">
    <location>
        <begin position="3308"/>
        <end position="3363"/>
    </location>
</feature>
<feature type="domain" description="TIL 8" evidence="2">
    <location>
        <begin position="3365"/>
        <end position="3421"/>
    </location>
</feature>
<feature type="domain" description="TSP type-1 15" evidence="6">
    <location>
        <begin position="3481"/>
        <end position="3529"/>
    </location>
</feature>
<feature type="domain" description="TSP type-1 16" evidence="6">
    <location>
        <begin position="3657"/>
        <end position="3713"/>
    </location>
</feature>
<feature type="domain" description="TSP type-1 17" evidence="6">
    <location>
        <begin position="3727"/>
        <end position="3779"/>
    </location>
</feature>
<feature type="domain" description="TSP type-1 18" evidence="6">
    <location>
        <begin position="3793"/>
        <end position="3849"/>
    </location>
</feature>
<feature type="domain" description="TSP type-1 19" evidence="6">
    <location>
        <begin position="3851"/>
        <end position="3906"/>
    </location>
</feature>
<feature type="domain" description="TIL 9" evidence="2">
    <location>
        <begin position="3909"/>
        <end position="3964"/>
    </location>
</feature>
<feature type="domain" description="TSP type-1 20" evidence="6">
    <location>
        <begin position="4006"/>
        <end position="4059"/>
    </location>
</feature>
<feature type="domain" description="TSP type-1 21" evidence="6">
    <location>
        <begin position="4100"/>
        <end position="4155"/>
    </location>
</feature>
<feature type="domain" description="TSP type-1 22" evidence="6">
    <location>
        <begin position="4157"/>
        <end position="4213"/>
    </location>
</feature>
<feature type="domain" description="TSP type-1 23" evidence="6">
    <location>
        <begin position="4215"/>
        <end position="4269"/>
    </location>
</feature>
<feature type="domain" description="TIL 10" evidence="2">
    <location>
        <begin position="4273"/>
        <end position="4328"/>
    </location>
</feature>
<feature type="domain" description="TSP type-1 24" evidence="6">
    <location>
        <begin position="4465"/>
        <end position="4516"/>
    </location>
</feature>
<feature type="domain" description="TIL 11" evidence="2">
    <location>
        <begin position="4530"/>
        <end position="4576"/>
    </location>
</feature>
<feature type="domain" description="TSP type-1 25" evidence="6">
    <location>
        <begin position="4616"/>
        <end position="4669"/>
    </location>
</feature>
<feature type="domain" description="TIL 12" evidence="2">
    <location>
        <begin position="4671"/>
        <end position="4725"/>
    </location>
</feature>
<feature type="domain" description="TIL 13" evidence="2">
    <location>
        <begin position="4777"/>
        <end position="4835"/>
    </location>
</feature>
<feature type="domain" description="VWFC 3" evidence="7">
    <location>
        <begin position="4835"/>
        <end position="4893"/>
    </location>
</feature>
<feature type="domain" description="CTCK" evidence="3">
    <location>
        <begin position="4892"/>
        <end position="4991"/>
    </location>
</feature>
<feature type="region of interest" description="Disordered" evidence="9">
    <location>
        <begin position="1406"/>
        <end position="1440"/>
    </location>
</feature>
<feature type="region of interest" description="Disordered" evidence="9">
    <location>
        <begin position="2119"/>
        <end position="2209"/>
    </location>
</feature>
<feature type="compositionally biased region" description="Polar residues" evidence="9">
    <location>
        <begin position="1420"/>
        <end position="1440"/>
    </location>
</feature>
<feature type="compositionally biased region" description="Polar residues" evidence="9">
    <location>
        <begin position="2130"/>
        <end position="2144"/>
    </location>
</feature>
<feature type="compositionally biased region" description="Basic and acidic residues" evidence="9">
    <location>
        <begin position="2148"/>
        <end position="2158"/>
    </location>
</feature>
<feature type="compositionally biased region" description="Polar residues" evidence="9">
    <location>
        <begin position="2164"/>
        <end position="2173"/>
    </location>
</feature>
<feature type="compositionally biased region" description="Polar residues" evidence="9">
    <location>
        <begin position="2190"/>
        <end position="2201"/>
    </location>
</feature>
<feature type="glycosylation site" description="N-linked (GlcNAc...) asparagine" evidence="2">
    <location>
        <position position="88"/>
    </location>
</feature>
<feature type="glycosylation site" description="N-linked (GlcNAc...) asparagine" evidence="2">
    <location>
        <position position="130"/>
    </location>
</feature>
<feature type="glycosylation site" description="N-linked (GlcNAc...) asparagine" evidence="2">
    <location>
        <position position="534"/>
    </location>
</feature>
<feature type="glycosylation site" description="N-linked (GlcNAc...) asparagine" evidence="2">
    <location>
        <position position="698"/>
    </location>
</feature>
<feature type="glycosylation site" description="N-linked (GlcNAc...) asparagine" evidence="2">
    <location>
        <position position="771"/>
    </location>
</feature>
<feature type="glycosylation site" description="N-linked (GlcNAc...) asparagine" evidence="2">
    <location>
        <position position="790"/>
    </location>
</feature>
<feature type="glycosylation site" description="N-linked (GlcNAc...) asparagine" evidence="2">
    <location>
        <position position="824"/>
    </location>
</feature>
<feature type="glycosylation site" description="N-linked (GlcNAc...) asparagine" evidence="2">
    <location>
        <position position="866"/>
    </location>
</feature>
<feature type="glycosylation site" description="N-linked (GlcNAc...) asparagine" evidence="2">
    <location>
        <position position="1230"/>
    </location>
</feature>
<feature type="glycosylation site" description="N-linked (GlcNAc...) asparagine" evidence="2">
    <location>
        <position position="1528"/>
    </location>
</feature>
<feature type="glycosylation site" description="N-linked (GlcNAc...) asparagine" evidence="2">
    <location>
        <position position="1598"/>
    </location>
</feature>
<feature type="glycosylation site" description="N-linked (GlcNAc...) asparagine" evidence="2">
    <location>
        <position position="1687"/>
    </location>
</feature>
<feature type="glycosylation site" description="N-linked (GlcNAc...) asparagine" evidence="2">
    <location>
        <position position="1892"/>
    </location>
</feature>
<feature type="glycosylation site" description="N-linked (GlcNAc...) asparagine" evidence="2">
    <location>
        <position position="1989"/>
    </location>
</feature>
<feature type="glycosylation site" description="N-linked (GlcNAc...) asparagine" evidence="2">
    <location>
        <position position="2481"/>
    </location>
</feature>
<feature type="glycosylation site" description="N-linked (GlcNAc...) asparagine" evidence="2">
    <location>
        <position position="2530"/>
    </location>
</feature>
<feature type="glycosylation site" description="N-linked (GlcNAc...) asparagine" evidence="2">
    <location>
        <position position="2772"/>
    </location>
</feature>
<feature type="glycosylation site" description="N-linked (GlcNAc...) asparagine" evidence="2">
    <location>
        <position position="2802"/>
    </location>
</feature>
<feature type="glycosylation site" description="N-linked (GlcNAc...) asparagine" evidence="2">
    <location>
        <position position="2897"/>
    </location>
</feature>
<feature type="glycosylation site" description="N-linked (GlcNAc...) asparagine" evidence="2">
    <location>
        <position position="2952"/>
    </location>
</feature>
<feature type="glycosylation site" description="N-linked (GlcNAc...) asparagine" evidence="2">
    <location>
        <position position="2999"/>
    </location>
</feature>
<feature type="glycosylation site" description="N-linked (GlcNAc...) asparagine" evidence="2">
    <location>
        <position position="3009"/>
    </location>
</feature>
<feature type="glycosylation site" description="N-linked (GlcNAc...) asparagine" evidence="2">
    <location>
        <position position="3146"/>
    </location>
</feature>
<feature type="glycosylation site" description="N-linked (GlcNAc...) asparagine" evidence="2">
    <location>
        <position position="3235"/>
    </location>
</feature>
<feature type="glycosylation site" description="N-linked (GlcNAc...) asparagine" evidence="2">
    <location>
        <position position="3301"/>
    </location>
</feature>
<feature type="glycosylation site" description="N-linked (GlcNAc...) asparagine" evidence="2">
    <location>
        <position position="3357"/>
    </location>
</feature>
<feature type="glycosylation site" description="N-linked (GlcNAc...) asparagine" evidence="2">
    <location>
        <position position="3435"/>
    </location>
</feature>
<feature type="glycosylation site" description="N-linked (GlcNAc...) asparagine" evidence="2">
    <location>
        <position position="3462"/>
    </location>
</feature>
<feature type="glycosylation site" description="N-linked (GlcNAc...) asparagine" evidence="2">
    <location>
        <position position="3638"/>
    </location>
</feature>
<feature type="glycosylation site" description="N-linked (GlcNAc...) asparagine" evidence="2">
    <location>
        <position position="3761"/>
    </location>
</feature>
<feature type="glycosylation site" description="N-linked (GlcNAc...) asparagine" evidence="2">
    <location>
        <position position="3986"/>
    </location>
</feature>
<feature type="glycosylation site" description="N-linked (GlcNAc...) asparagine" evidence="2">
    <location>
        <position position="4196"/>
    </location>
</feature>
<feature type="glycosylation site" description="N-linked (GlcNAc...) asparagine" evidence="2">
    <location>
        <position position="4267"/>
    </location>
</feature>
<feature type="glycosylation site" description="N-linked (GlcNAc...) asparagine" evidence="2">
    <location>
        <position position="4408"/>
    </location>
</feature>
<feature type="glycosylation site" description="N-linked (GlcNAc...) asparagine" evidence="2">
    <location>
        <position position="4463"/>
    </location>
</feature>
<feature type="glycosylation site" description="N-linked (GlcNAc...) asparagine" evidence="2">
    <location>
        <position position="4584"/>
    </location>
</feature>
<feature type="glycosylation site" description="N-linked (GlcNAc...) asparagine" evidence="2">
    <location>
        <position position="4601"/>
    </location>
</feature>
<feature type="glycosylation site" description="N-linked (GlcNAc...) asparagine" evidence="2">
    <location>
        <position position="4606"/>
    </location>
</feature>
<feature type="glycosylation site" description="N-linked (GlcNAc...) asparagine" evidence="2">
    <location>
        <position position="4716"/>
    </location>
</feature>
<feature type="glycosylation site" description="N-linked (GlcNAc...) asparagine" evidence="2">
    <location>
        <position position="4756"/>
    </location>
</feature>
<feature type="glycosylation site" description="N-linked (GlcNAc...) asparagine" evidence="2">
    <location>
        <position position="4799"/>
    </location>
</feature>
<feature type="glycosylation site" description="N-linked (GlcNAc...) asparagine" evidence="2">
    <location>
        <position position="4806"/>
    </location>
</feature>
<feature type="glycosylation site" description="N-linked (GlcNAc...) asparagine" evidence="2">
    <location>
        <position position="4912"/>
    </location>
</feature>
<feature type="disulfide bond" evidence="8">
    <location>
        <begin position="74"/>
        <end position="202"/>
    </location>
</feature>
<feature type="disulfide bond" evidence="8">
    <location>
        <begin position="103"/>
        <end position="240"/>
    </location>
</feature>
<feature type="disulfide bond" evidence="8">
    <location>
        <begin position="444"/>
        <end position="577"/>
    </location>
</feature>
<feature type="disulfide bond" evidence="8">
    <location>
        <begin position="468"/>
        <end position="614"/>
    </location>
</feature>
<feature type="disulfide bond" evidence="8">
    <location>
        <begin position="894"/>
        <end position="1026"/>
    </location>
</feature>
<feature type="disulfide bond" evidence="8">
    <location>
        <begin position="916"/>
        <end position="1061"/>
    </location>
</feature>
<feature type="disulfide bond" evidence="8">
    <location>
        <begin position="937"/>
        <end position="944"/>
    </location>
</feature>
<feature type="disulfide bond" evidence="5">
    <location>
        <begin position="1254"/>
        <end position="1267"/>
    </location>
</feature>
<feature type="disulfide bond" evidence="5">
    <location>
        <begin position="1261"/>
        <end position="1280"/>
    </location>
</feature>
<feature type="disulfide bond" evidence="5">
    <location>
        <begin position="1274"/>
        <end position="1289"/>
    </location>
</feature>
<feature type="disulfide bond" evidence="5">
    <location>
        <begin position="1294"/>
        <end position="1306"/>
    </location>
</feature>
<feature type="disulfide bond" evidence="5">
    <location>
        <begin position="1301"/>
        <end position="1319"/>
    </location>
</feature>
<feature type="disulfide bond" evidence="5">
    <location>
        <begin position="1313"/>
        <end position="1328"/>
    </location>
</feature>
<feature type="disulfide bond" evidence="5">
    <location>
        <begin position="1330"/>
        <end position="1342"/>
    </location>
</feature>
<feature type="disulfide bond" evidence="5">
    <location>
        <begin position="1337"/>
        <end position="1355"/>
    </location>
</feature>
<feature type="disulfide bond" evidence="5">
    <location>
        <begin position="1349"/>
        <end position="1364"/>
    </location>
</feature>
<feature type="disulfide bond" evidence="5">
    <location>
        <begin position="1370"/>
        <end position="1382"/>
    </location>
</feature>
<feature type="disulfide bond" evidence="5">
    <location>
        <begin position="1377"/>
        <end position="1395"/>
    </location>
</feature>
<feature type="disulfide bond" evidence="5">
    <location>
        <begin position="1389"/>
        <end position="1406"/>
    </location>
</feature>
<feature type="disulfide bond" evidence="5">
    <location>
        <begin position="1443"/>
        <end position="1455"/>
    </location>
</feature>
<feature type="disulfide bond" evidence="5">
    <location>
        <begin position="1450"/>
        <end position="1468"/>
    </location>
</feature>
<feature type="disulfide bond" evidence="5">
    <location>
        <begin position="1462"/>
        <end position="1477"/>
    </location>
</feature>
<feature type="disulfide bond" evidence="5">
    <location>
        <begin position="1481"/>
        <end position="1494"/>
    </location>
</feature>
<feature type="disulfide bond" evidence="5">
    <location>
        <begin position="1488"/>
        <end position="1507"/>
    </location>
</feature>
<feature type="disulfide bond" evidence="5">
    <location>
        <begin position="1501"/>
        <end position="1518"/>
    </location>
</feature>
<feature type="disulfide bond" evidence="5">
    <location>
        <begin position="1534"/>
        <end position="1544"/>
    </location>
</feature>
<feature type="disulfide bond" evidence="5">
    <location>
        <begin position="1539"/>
        <end position="1557"/>
    </location>
</feature>
<feature type="disulfide bond" evidence="5">
    <location>
        <begin position="1551"/>
        <end position="1572"/>
    </location>
</feature>
<feature type="disulfide bond" evidence="6">
    <location>
        <begin position="1584"/>
        <end position="1620"/>
    </location>
</feature>
<feature type="disulfide bond" evidence="6">
    <location>
        <begin position="1588"/>
        <end position="1625"/>
    </location>
</feature>
<feature type="disulfide bond" evidence="6">
    <location>
        <begin position="1599"/>
        <end position="1610"/>
    </location>
</feature>
<feature type="disulfide bond" evidence="6">
    <location>
        <begin position="1640"/>
        <end position="1680"/>
    </location>
</feature>
<feature type="disulfide bond" evidence="6">
    <location>
        <begin position="1644"/>
        <end position="1685"/>
    </location>
</feature>
<feature type="disulfide bond" evidence="6">
    <location>
        <begin position="1654"/>
        <end position="1664"/>
    </location>
</feature>
<feature type="disulfide bond" evidence="6">
    <location>
        <begin position="1772"/>
        <end position="1811"/>
    </location>
</feature>
<feature type="disulfide bond" evidence="6">
    <location>
        <begin position="1783"/>
        <end position="1787"/>
    </location>
</feature>
<feature type="disulfide bond" evidence="6">
    <location>
        <begin position="1821"/>
        <end position="1826"/>
    </location>
</feature>
<feature type="disulfide bond" evidence="5">
    <location>
        <begin position="2092"/>
        <end position="2104"/>
    </location>
</feature>
<feature type="disulfide bond" evidence="5">
    <location>
        <begin position="2099"/>
        <end position="2117"/>
    </location>
</feature>
<feature type="disulfide bond" evidence="5">
    <location>
        <begin position="2111"/>
        <end position="2126"/>
    </location>
</feature>
<feature type="disulfide bond" evidence="5">
    <location>
        <begin position="2243"/>
        <end position="2255"/>
    </location>
</feature>
<feature type="disulfide bond" evidence="5">
    <location>
        <begin position="2250"/>
        <end position="2268"/>
    </location>
</feature>
<feature type="disulfide bond" evidence="5">
    <location>
        <begin position="2262"/>
        <end position="2277"/>
    </location>
</feature>
<feature type="disulfide bond" evidence="5">
    <location>
        <begin position="2300"/>
        <end position="2312"/>
    </location>
</feature>
<feature type="disulfide bond" evidence="5">
    <location>
        <begin position="2307"/>
        <end position="2325"/>
    </location>
</feature>
<feature type="disulfide bond" evidence="5">
    <location>
        <begin position="2319"/>
        <end position="2334"/>
    </location>
</feature>
<feature type="disulfide bond" evidence="6">
    <location>
        <begin position="2337"/>
        <end position="2373"/>
    </location>
</feature>
<feature type="disulfide bond" evidence="6">
    <location>
        <begin position="2348"/>
        <end position="2352"/>
    </location>
</feature>
<feature type="disulfide bond" evidence="6">
    <location>
        <begin position="2383"/>
        <end position="2388"/>
    </location>
</feature>
<feature type="disulfide bond" evidence="6">
    <location>
        <begin position="2403"/>
        <end position="2440"/>
    </location>
</feature>
<feature type="disulfide bond" evidence="6">
    <location>
        <begin position="2407"/>
        <end position="2445"/>
    </location>
</feature>
<feature type="disulfide bond" evidence="6">
    <location>
        <begin position="2418"/>
        <end position="2430"/>
    </location>
</feature>
<feature type="disulfide bond" evidence="6">
    <location>
        <begin position="2552"/>
        <end position="2590"/>
    </location>
</feature>
<feature type="disulfide bond" evidence="6">
    <location>
        <begin position="2563"/>
        <end position="2567"/>
    </location>
</feature>
<feature type="disulfide bond" evidence="6">
    <location>
        <begin position="2600"/>
        <end position="2604"/>
    </location>
</feature>
<feature type="disulfide bond" evidence="6">
    <location>
        <begin position="2620"/>
        <end position="2658"/>
    </location>
</feature>
<feature type="disulfide bond" evidence="6">
    <location>
        <begin position="2624"/>
        <end position="2663"/>
    </location>
</feature>
<feature type="disulfide bond" evidence="6">
    <location>
        <begin position="2640"/>
        <end position="2648"/>
    </location>
</feature>
<feature type="disulfide bond" evidence="6">
    <location>
        <begin position="2678"/>
        <end position="2713"/>
    </location>
</feature>
<feature type="disulfide bond" evidence="6">
    <location>
        <begin position="2682"/>
        <end position="2718"/>
    </location>
</feature>
<feature type="disulfide bond" evidence="6">
    <location>
        <begin position="2693"/>
        <end position="2703"/>
    </location>
</feature>
<feature type="disulfide bond" evidence="6">
    <location>
        <begin position="2821"/>
        <end position="2859"/>
    </location>
</feature>
<feature type="disulfide bond" evidence="6">
    <location>
        <begin position="2832"/>
        <end position="2836"/>
    </location>
</feature>
<feature type="disulfide bond" evidence="6">
    <location>
        <begin position="2869"/>
        <end position="2874"/>
    </location>
</feature>
<feature type="disulfide bond" evidence="6">
    <location>
        <begin position="3031"/>
        <end position="3080"/>
    </location>
</feature>
<feature type="disulfide bond" evidence="6">
    <location>
        <begin position="3035"/>
        <end position="3085"/>
    </location>
</feature>
<feature type="disulfide bond" evidence="6">
    <location>
        <begin position="3046"/>
        <end position="3070"/>
    </location>
</feature>
<feature type="disulfide bond" evidence="6">
    <location>
        <begin position="3100"/>
        <end position="3137"/>
    </location>
</feature>
<feature type="disulfide bond" evidence="6">
    <location>
        <begin position="3104"/>
        <end position="3142"/>
    </location>
</feature>
<feature type="disulfide bond" evidence="6">
    <location>
        <begin position="3115"/>
        <end position="3127"/>
    </location>
</feature>
<feature type="disulfide bond" evidence="6">
    <location>
        <begin position="3256"/>
        <end position="3299"/>
    </location>
</feature>
<feature type="disulfide bond" evidence="6">
    <location>
        <begin position="3260"/>
        <end position="3305"/>
    </location>
</feature>
<feature type="disulfide bond" evidence="6">
    <location>
        <begin position="3271"/>
        <end position="3283"/>
    </location>
</feature>
<feature type="disulfide bond" evidence="6">
    <location>
        <begin position="3320"/>
        <end position="3355"/>
    </location>
</feature>
<feature type="disulfide bond" evidence="6">
    <location>
        <begin position="3323"/>
        <end position="3362"/>
    </location>
</feature>
<feature type="disulfide bond" evidence="6">
    <location>
        <begin position="3333"/>
        <end position="3345"/>
    </location>
</feature>
<feature type="disulfide bond" evidence="6">
    <location>
        <begin position="3493"/>
        <end position="3523"/>
    </location>
</feature>
<feature type="disulfide bond" evidence="6">
    <location>
        <begin position="3497"/>
        <end position="3528"/>
    </location>
</feature>
<feature type="disulfide bond" evidence="6">
    <location>
        <begin position="3508"/>
        <end position="3513"/>
    </location>
</feature>
<feature type="disulfide bond" evidence="6">
    <location>
        <begin position="3669"/>
        <end position="3707"/>
    </location>
</feature>
<feature type="disulfide bond" evidence="6">
    <location>
        <begin position="3673"/>
        <end position="3712"/>
    </location>
</feature>
<feature type="disulfide bond" evidence="6">
    <location>
        <begin position="3685"/>
        <end position="3697"/>
    </location>
</feature>
<feature type="disulfide bond" evidence="6">
    <location>
        <begin position="3794"/>
        <end position="3830"/>
    </location>
</feature>
<feature type="disulfide bond" evidence="6">
    <location>
        <begin position="3805"/>
        <end position="3809"/>
    </location>
</feature>
<feature type="disulfide bond" evidence="6">
    <location>
        <begin position="3843"/>
        <end position="3848"/>
    </location>
</feature>
<feature type="disulfide bond" evidence="6">
    <location>
        <begin position="3863"/>
        <end position="3900"/>
    </location>
</feature>
<feature type="disulfide bond" evidence="6">
    <location>
        <begin position="3867"/>
        <end position="3905"/>
    </location>
</feature>
<feature type="disulfide bond" evidence="6">
    <location>
        <begin position="3878"/>
        <end position="3890"/>
    </location>
</feature>
<feature type="disulfide bond" evidence="6">
    <location>
        <begin position="4007"/>
        <end position="4043"/>
    </location>
</feature>
<feature type="disulfide bond" evidence="6">
    <location>
        <begin position="4018"/>
        <end position="4022"/>
    </location>
</feature>
<feature type="disulfide bond" evidence="6">
    <location>
        <begin position="4053"/>
        <end position="4058"/>
    </location>
</feature>
<feature type="disulfide bond" evidence="6">
    <location>
        <begin position="4112"/>
        <end position="4149"/>
    </location>
</feature>
<feature type="disulfide bond" evidence="6">
    <location>
        <begin position="4116"/>
        <end position="4154"/>
    </location>
</feature>
<feature type="disulfide bond" evidence="6">
    <location>
        <begin position="4127"/>
        <end position="4139"/>
    </location>
</feature>
<feature type="disulfide bond" evidence="6">
    <location>
        <begin position="4169"/>
        <end position="4207"/>
    </location>
</feature>
<feature type="disulfide bond" evidence="6">
    <location>
        <begin position="4173"/>
        <end position="4212"/>
    </location>
</feature>
<feature type="disulfide bond" evidence="6">
    <location>
        <begin position="4184"/>
        <end position="4195"/>
    </location>
</feature>
<feature type="disulfide bond" evidence="6">
    <location>
        <begin position="4216"/>
        <end position="4253"/>
    </location>
</feature>
<feature type="disulfide bond" evidence="6">
    <location>
        <begin position="4227"/>
        <end position="4229"/>
    </location>
</feature>
<feature type="disulfide bond" evidence="6">
    <location>
        <begin position="4263"/>
        <end position="4268"/>
    </location>
</feature>
<feature type="disulfide bond" evidence="6">
    <location>
        <begin position="4466"/>
        <end position="4500"/>
    </location>
</feature>
<feature type="disulfide bond" evidence="6">
    <location>
        <begin position="4477"/>
        <end position="4481"/>
    </location>
</feature>
<feature type="disulfide bond" evidence="6">
    <location>
        <begin position="4510"/>
        <end position="4515"/>
    </location>
</feature>
<feature type="disulfide bond" evidence="6">
    <location>
        <begin position="4628"/>
        <end position="4663"/>
    </location>
</feature>
<feature type="disulfide bond" evidence="6">
    <location>
        <begin position="4632"/>
        <end position="4668"/>
    </location>
</feature>
<feature type="disulfide bond" evidence="6">
    <location>
        <begin position="4643"/>
        <end position="4652"/>
    </location>
</feature>
<feature type="disulfide bond" evidence="3">
    <location>
        <begin position="4892"/>
        <end position="4952"/>
    </location>
</feature>
<feature type="disulfide bond" evidence="3">
    <location>
        <begin position="4918"/>
        <end position="4969"/>
    </location>
</feature>
<feature type="disulfide bond" evidence="3">
    <location>
        <begin position="4928"/>
        <end position="4985"/>
    </location>
</feature>
<feature type="disulfide bond" evidence="3">
    <location>
        <begin position="4932"/>
        <end position="4987"/>
    </location>
</feature>
<feature type="sequence conflict" description="In Ref. 1; CAD42654." evidence="11" ref="1">
    <original>H</original>
    <variation>Q</variation>
    <location>
        <position position="192"/>
    </location>
</feature>
<feature type="sequence conflict" description="In Ref. 1; CAD42654." evidence="11" ref="1">
    <original>V</original>
    <variation>L</variation>
    <location>
        <position position="1043"/>
    </location>
</feature>
<feature type="sequence conflict" description="In Ref. 1; CAD42654." evidence="11" ref="1">
    <original>E</original>
    <variation>Y</variation>
    <location>
        <position position="1049"/>
    </location>
</feature>
<feature type="sequence conflict" description="In Ref. 1; CAD42654." evidence="11" ref="1">
    <original>V</original>
    <variation>W</variation>
    <location>
        <position position="1071"/>
    </location>
</feature>
<feature type="sequence conflict" description="In Ref. 1; CAD42654." evidence="11" ref="1">
    <original>R</original>
    <variation>P</variation>
    <location>
        <position position="1080"/>
    </location>
</feature>
<feature type="sequence conflict" description="In Ref. 1; CAD42654." evidence="11" ref="1">
    <original>F</original>
    <variation>G</variation>
    <location>
        <position position="1769"/>
    </location>
</feature>
<feature type="sequence conflict" description="In Ref. 1; CAD42654." evidence="11" ref="1">
    <original>P</original>
    <variation>R</variation>
    <location>
        <position position="3379"/>
    </location>
</feature>
<feature type="sequence conflict" description="In Ref. 1; CAD42654." evidence="11" ref="1">
    <original>D</original>
    <variation>H</variation>
    <location>
        <position position="3412"/>
    </location>
</feature>